<feature type="chain" id="PRO_0000124761" description="Membrane protein insertase YidC">
    <location>
        <begin position="1"/>
        <end position="622"/>
    </location>
</feature>
<feature type="transmembrane region" description="Helical" evidence="1">
    <location>
        <begin position="6"/>
        <end position="26"/>
    </location>
</feature>
<feature type="transmembrane region" description="Helical" evidence="1">
    <location>
        <begin position="413"/>
        <end position="433"/>
    </location>
</feature>
<feature type="transmembrane region" description="Helical" evidence="1">
    <location>
        <begin position="483"/>
        <end position="503"/>
    </location>
</feature>
<feature type="transmembrane region" description="Helical" evidence="1">
    <location>
        <begin position="513"/>
        <end position="533"/>
    </location>
</feature>
<feature type="transmembrane region" description="Helical" evidence="1">
    <location>
        <begin position="579"/>
        <end position="599"/>
    </location>
</feature>
<feature type="region of interest" description="Disordered" evidence="2">
    <location>
        <begin position="37"/>
        <end position="71"/>
    </location>
</feature>
<organism>
    <name type="scientific">Treponema pallidum (strain Nichols)</name>
    <dbReference type="NCBI Taxonomy" id="243276"/>
    <lineage>
        <taxon>Bacteria</taxon>
        <taxon>Pseudomonadati</taxon>
        <taxon>Spirochaetota</taxon>
        <taxon>Spirochaetia</taxon>
        <taxon>Spirochaetales</taxon>
        <taxon>Treponemataceae</taxon>
        <taxon>Treponema</taxon>
    </lineage>
</organism>
<proteinExistence type="inferred from homology"/>
<gene>
    <name evidence="1" type="primary">yidC</name>
    <name type="ordered locus">TP_0949</name>
</gene>
<accession>O66103</accession>
<accession>O83915</accession>
<comment type="function">
    <text evidence="1">Required for the insertion and/or proper folding and/or complex formation of integral membrane proteins into the membrane. Involved in integration of membrane proteins that insert both dependently and independently of the Sec translocase complex, as well as at least some lipoproteins. Aids folding of multispanning membrane proteins.</text>
</comment>
<comment type="subunit">
    <text evidence="1">Interacts with the Sec translocase complex via SecD. Specifically interacts with transmembrane segments of nascent integral membrane proteins during membrane integration.</text>
</comment>
<comment type="subcellular location">
    <subcellularLocation>
        <location evidence="1">Cell inner membrane</location>
        <topology evidence="1">Multi-pass membrane protein</topology>
    </subcellularLocation>
</comment>
<comment type="similarity">
    <text evidence="1">Belongs to the OXA1/ALB3/YidC family. Type 1 subfamily.</text>
</comment>
<comment type="sequence caution" evidence="3">
    <conflict type="erroneous initiation">
        <sequence resource="EMBL-CDS" id="AAC65906"/>
    </conflict>
    <text>Extended N-terminus.</text>
</comment>
<evidence type="ECO:0000255" key="1">
    <source>
        <dbReference type="HAMAP-Rule" id="MF_01810"/>
    </source>
</evidence>
<evidence type="ECO:0000256" key="2">
    <source>
        <dbReference type="SAM" id="MobiDB-lite"/>
    </source>
</evidence>
<evidence type="ECO:0000305" key="3"/>
<name>YIDC_TREPA</name>
<reference key="1">
    <citation type="journal article" date="1998" name="Science">
        <title>Complete genome sequence of Treponema pallidum, the syphilis spirochete.</title>
        <authorList>
            <person name="Fraser C.M."/>
            <person name="Norris S.J."/>
            <person name="Weinstock G.M."/>
            <person name="White O."/>
            <person name="Sutton G.G."/>
            <person name="Dodson R.J."/>
            <person name="Gwinn M.L."/>
            <person name="Hickey E.K."/>
            <person name="Clayton R.A."/>
            <person name="Ketchum K.A."/>
            <person name="Sodergren E."/>
            <person name="Hardham J.M."/>
            <person name="McLeod M.P."/>
            <person name="Salzberg S.L."/>
            <person name="Peterson J.D."/>
            <person name="Khalak H.G."/>
            <person name="Richardson D.L."/>
            <person name="Howell J.K."/>
            <person name="Chidambaram M."/>
            <person name="Utterback T.R."/>
            <person name="McDonald L.A."/>
            <person name="Artiach P."/>
            <person name="Bowman C."/>
            <person name="Cotton M.D."/>
            <person name="Fujii C."/>
            <person name="Garland S.A."/>
            <person name="Hatch B."/>
            <person name="Horst K."/>
            <person name="Roberts K.M."/>
            <person name="Sandusky M."/>
            <person name="Weidman J.F."/>
            <person name="Smith H.O."/>
            <person name="Venter J.C."/>
        </authorList>
    </citation>
    <scope>NUCLEOTIDE SEQUENCE [LARGE SCALE GENOMIC DNA]</scope>
    <source>
        <strain>Nichols</strain>
    </source>
</reference>
<reference key="2">
    <citation type="submission" date="1997-04" db="EMBL/GenBank/DDBJ databases">
        <authorList>
            <person name="Shevchenko D.V."/>
            <person name="Akins D.R."/>
            <person name="Radolf J.D."/>
        </authorList>
    </citation>
    <scope>NUCLEOTIDE SEQUENCE [GENOMIC DNA] OF 456-622</scope>
</reference>
<dbReference type="EMBL" id="AE000520">
    <property type="protein sequence ID" value="AAC65906.1"/>
    <property type="status" value="ALT_INIT"/>
    <property type="molecule type" value="Genomic_DNA"/>
</dbReference>
<dbReference type="EMBL" id="U97573">
    <property type="protein sequence ID" value="AAC08053.1"/>
    <property type="molecule type" value="Genomic_DNA"/>
</dbReference>
<dbReference type="PIR" id="C71261">
    <property type="entry name" value="C71261"/>
</dbReference>
<dbReference type="RefSeq" id="WP_014342847.1">
    <property type="nucleotide sequence ID" value="NC_021490.2"/>
</dbReference>
<dbReference type="SMR" id="O66103"/>
<dbReference type="STRING" id="243276.TP_0949"/>
<dbReference type="EnsemblBacteria" id="AAC65906">
    <property type="protein sequence ID" value="AAC65906"/>
    <property type="gene ID" value="TP_0949"/>
</dbReference>
<dbReference type="GeneID" id="93876697"/>
<dbReference type="KEGG" id="tpa:TP_0949"/>
<dbReference type="eggNOG" id="COG0706">
    <property type="taxonomic scope" value="Bacteria"/>
</dbReference>
<dbReference type="HOGENOM" id="CLU_016535_2_0_12"/>
<dbReference type="OrthoDB" id="9780552at2"/>
<dbReference type="Proteomes" id="UP000000811">
    <property type="component" value="Chromosome"/>
</dbReference>
<dbReference type="GO" id="GO:0005886">
    <property type="term" value="C:plasma membrane"/>
    <property type="evidence" value="ECO:0007669"/>
    <property type="project" value="UniProtKB-SubCell"/>
</dbReference>
<dbReference type="GO" id="GO:0032977">
    <property type="term" value="F:membrane insertase activity"/>
    <property type="evidence" value="ECO:0007669"/>
    <property type="project" value="InterPro"/>
</dbReference>
<dbReference type="GO" id="GO:0051205">
    <property type="term" value="P:protein insertion into membrane"/>
    <property type="evidence" value="ECO:0007669"/>
    <property type="project" value="TreeGrafter"/>
</dbReference>
<dbReference type="GO" id="GO:0015031">
    <property type="term" value="P:protein transport"/>
    <property type="evidence" value="ECO:0007669"/>
    <property type="project" value="UniProtKB-KW"/>
</dbReference>
<dbReference type="CDD" id="cd20070">
    <property type="entry name" value="5TM_YidC_Alb3"/>
    <property type="match status" value="1"/>
</dbReference>
<dbReference type="CDD" id="cd19961">
    <property type="entry name" value="EcYidC-like_peri"/>
    <property type="match status" value="1"/>
</dbReference>
<dbReference type="Gene3D" id="2.70.98.90">
    <property type="match status" value="1"/>
</dbReference>
<dbReference type="HAMAP" id="MF_01810">
    <property type="entry name" value="YidC_type1"/>
    <property type="match status" value="1"/>
</dbReference>
<dbReference type="InterPro" id="IPR019998">
    <property type="entry name" value="Membr_insert_YidC"/>
</dbReference>
<dbReference type="InterPro" id="IPR028053">
    <property type="entry name" value="Membr_insert_YidC_N"/>
</dbReference>
<dbReference type="InterPro" id="IPR001708">
    <property type="entry name" value="YidC/ALB3/OXA1/COX18"/>
</dbReference>
<dbReference type="InterPro" id="IPR028055">
    <property type="entry name" value="YidC/Oxa/ALB_C"/>
</dbReference>
<dbReference type="InterPro" id="IPR047196">
    <property type="entry name" value="YidC_ALB_C"/>
</dbReference>
<dbReference type="InterPro" id="IPR038221">
    <property type="entry name" value="YidC_periplasmic_sf"/>
</dbReference>
<dbReference type="NCBIfam" id="NF002355">
    <property type="entry name" value="PRK01318.2-2"/>
    <property type="match status" value="1"/>
</dbReference>
<dbReference type="NCBIfam" id="TIGR03592">
    <property type="entry name" value="yidC_oxa1_cterm"/>
    <property type="match status" value="1"/>
</dbReference>
<dbReference type="PANTHER" id="PTHR12428:SF65">
    <property type="entry name" value="CYTOCHROME C OXIDASE ASSEMBLY PROTEIN COX18, MITOCHONDRIAL"/>
    <property type="match status" value="1"/>
</dbReference>
<dbReference type="PANTHER" id="PTHR12428">
    <property type="entry name" value="OXA1"/>
    <property type="match status" value="1"/>
</dbReference>
<dbReference type="Pfam" id="PF02096">
    <property type="entry name" value="60KD_IMP"/>
    <property type="match status" value="1"/>
</dbReference>
<dbReference type="Pfam" id="PF14849">
    <property type="entry name" value="YidC_periplas"/>
    <property type="match status" value="1"/>
</dbReference>
<dbReference type="PRINTS" id="PR00701">
    <property type="entry name" value="60KDINNERMP"/>
</dbReference>
<dbReference type="PRINTS" id="PR01900">
    <property type="entry name" value="YIDCPROTEIN"/>
</dbReference>
<protein>
    <recommendedName>
        <fullName evidence="1">Membrane protein insertase YidC</fullName>
    </recommendedName>
    <alternativeName>
        <fullName evidence="1">Foldase YidC</fullName>
    </alternativeName>
    <alternativeName>
        <fullName evidence="1">Membrane integrase YidC</fullName>
    </alternativeName>
    <alternativeName>
        <fullName evidence="1">Membrane protein YidC</fullName>
    </alternativeName>
</protein>
<keyword id="KW-0997">Cell inner membrane</keyword>
<keyword id="KW-1003">Cell membrane</keyword>
<keyword id="KW-0143">Chaperone</keyword>
<keyword id="KW-0472">Membrane</keyword>
<keyword id="KW-0653">Protein transport</keyword>
<keyword id="KW-1185">Reference proteome</keyword>
<keyword id="KW-0812">Transmembrane</keyword>
<keyword id="KW-1133">Transmembrane helix</keyword>
<keyword id="KW-0813">Transport</keyword>
<sequence length="622" mass="70121">MKKNMFIAVVLSVLVLVGASFLQELLYPSASSSHSAAEHTLSAVPEETRTQSAHGGAADTQETTQPAAHPSGQVLVFPESETEERVERTYVVRTPLVQVTFTNRGGDILSYQLREHYAAQRREYVEMVEQARPDHRAFSLALGDEYAPNVNALFQVKQEIGARGVHSIGFYRSVATQHADGTRTPFVLAKRYVFYPDNYMFELHVSLSADVLEEREDSRQGAKVRAVAETNAGPATTVLARANGFDFGTASYTLRTPPEIGPERNAADKYEFRTFMVGAGGKAKTYALKGDGREQVDTPVSWASVSGKYFALIVLPNDADSLKRLVLSAPQAETAVQHHIAFVRRAVAQPAVADVYRVYIGPCAEQYLSAYNVASRNPYGLERTYIDAVAVSGGILYPLEVLLKWLLRLFYTLIPNWGVAIILVTIAIKVLFFPLTKRSFIAMQKMQELQPHMQRIQERYKGNTQKIHEEMAKLYREAQYNPLSGCLPTLVQMPIIFAMYRLFNNYFEFRGAMFIPYWIPDLSLADSVWTLPFALPVTQWTQMRMLPVLYVVSQIMFSKLTQVPHTEQQKTSMTIMTYVMPLFFFFFFYDAPSGLLVYWTAMNGVTLVQQLVMKRTANKNKT</sequence>